<comment type="function">
    <text evidence="3">Has antimicrobial activity against the Gram-positive bacteria methicillin-resistant S.aureus ATCC 33591 and L.monocytogenes EGD, the Gram-negative bacterium E.coli ML53p and the yeast C.albicans 820. Has no hemolytic activity towards human erythrocytes.</text>
</comment>
<comment type="subunit">
    <text evidence="1">Monomer. Homodimer.</text>
</comment>
<comment type="subcellular location">
    <subcellularLocation>
        <location evidence="1">Secreted</location>
    </subcellularLocation>
    <subcellularLocation>
        <location evidence="1">Membrane</location>
    </subcellularLocation>
    <text evidence="1">Associates with tumor cell membrane-derived microvesicles.</text>
</comment>
<comment type="mass spectrometry"/>
<comment type="similarity">
    <text evidence="2">Belongs to the beta-defensin family.</text>
</comment>
<organism>
    <name type="scientific">Emys orbicularis</name>
    <name type="common">European pond turtle</name>
    <dbReference type="NCBI Taxonomy" id="82168"/>
    <lineage>
        <taxon>Eukaryota</taxon>
        <taxon>Metazoa</taxon>
        <taxon>Chordata</taxon>
        <taxon>Craniata</taxon>
        <taxon>Vertebrata</taxon>
        <taxon>Euteleostomi</taxon>
        <taxon>Archelosauria</taxon>
        <taxon>Testudinata</taxon>
        <taxon>Testudines</taxon>
        <taxon>Cryptodira</taxon>
        <taxon>Durocryptodira</taxon>
        <taxon>Testudinoidea</taxon>
        <taxon>Emydidae</taxon>
        <taxon>Emys</taxon>
    </lineage>
</organism>
<sequence>YDLSKNCRLRGGICYIGKCPRRFFRSGSCSRGNVCCLRFG</sequence>
<reference evidence="5" key="1">
    <citation type="journal article" date="2009" name="Proteomics">
        <title>Isolation, purification and de novo sequencing of TBD-1, the first beta-defensin from leukocytes of reptiles.</title>
        <authorList>
            <person name="Stegemann C."/>
            <person name="Kolobov A. Jr."/>
            <person name="Leonova Y.F."/>
            <person name="Knappe D."/>
            <person name="Shamova O."/>
            <person name="Ovchinnikova T.V."/>
            <person name="Kokryakov V.N."/>
            <person name="Hoffmann R."/>
        </authorList>
    </citation>
    <scope>PROTEIN SEQUENCE</scope>
    <scope>FUNCTION</scope>
    <scope>MASS SPECTROMETRY</scope>
    <scope>DISULFIDE BONDS</scope>
    <scope>AMIDATION AT GLY-40</scope>
    <source>
        <tissue evidence="3">Leukocyte</tissue>
    </source>
</reference>
<feature type="peptide" id="PRO_0000371260" description="Beta-defensin 1" evidence="3">
    <location>
        <begin position="1"/>
        <end position="40"/>
    </location>
</feature>
<feature type="modified residue" description="Glycine amide" evidence="3">
    <location>
        <position position="40"/>
    </location>
</feature>
<feature type="disulfide bond" evidence="3">
    <location>
        <begin position="7"/>
        <end position="35"/>
    </location>
</feature>
<feature type="disulfide bond" evidence="3">
    <location>
        <begin position="14"/>
        <end position="29"/>
    </location>
</feature>
<feature type="disulfide bond" evidence="3">
    <location>
        <begin position="19"/>
        <end position="36"/>
    </location>
</feature>
<feature type="unsure residue" description="L or I" evidence="3">
    <location>
        <position position="37"/>
    </location>
</feature>
<protein>
    <recommendedName>
        <fullName evidence="4">Beta-defensin 1</fullName>
        <shortName evidence="4">TBD-1</shortName>
    </recommendedName>
</protein>
<accession>P86253</accession>
<proteinExistence type="evidence at protein level"/>
<evidence type="ECO:0000250" key="1">
    <source>
        <dbReference type="UniProtKB" id="P60022"/>
    </source>
</evidence>
<evidence type="ECO:0000255" key="2"/>
<evidence type="ECO:0000269" key="3">
    <source>
    </source>
</evidence>
<evidence type="ECO:0000303" key="4">
    <source>
    </source>
</evidence>
<evidence type="ECO:0000305" key="5"/>
<name>DFB1_EMYOR</name>
<dbReference type="SMR" id="P86253"/>
<dbReference type="GO" id="GO:0016020">
    <property type="term" value="C:membrane"/>
    <property type="evidence" value="ECO:0000250"/>
    <property type="project" value="UniProtKB"/>
</dbReference>
<dbReference type="GO" id="GO:1990742">
    <property type="term" value="C:microvesicle"/>
    <property type="evidence" value="ECO:0000250"/>
    <property type="project" value="UniProtKB"/>
</dbReference>
<dbReference type="GO" id="GO:0042802">
    <property type="term" value="F:identical protein binding"/>
    <property type="evidence" value="ECO:0000250"/>
    <property type="project" value="UniProtKB"/>
</dbReference>
<dbReference type="GO" id="GO:0042742">
    <property type="term" value="P:defense response to bacterium"/>
    <property type="evidence" value="ECO:0007669"/>
    <property type="project" value="UniProtKB-KW"/>
</dbReference>
<dbReference type="InterPro" id="IPR001855">
    <property type="entry name" value="Defensin_beta-like"/>
</dbReference>
<dbReference type="Pfam" id="PF00711">
    <property type="entry name" value="Defensin_beta"/>
    <property type="match status" value="1"/>
</dbReference>
<dbReference type="SUPFAM" id="SSF57392">
    <property type="entry name" value="Defensin-like"/>
    <property type="match status" value="1"/>
</dbReference>
<keyword id="KW-0027">Amidation</keyword>
<keyword id="KW-0044">Antibiotic</keyword>
<keyword id="KW-0929">Antimicrobial</keyword>
<keyword id="KW-0211">Defensin</keyword>
<keyword id="KW-0903">Direct protein sequencing</keyword>
<keyword id="KW-1015">Disulfide bond</keyword>
<keyword id="KW-0472">Membrane</keyword>
<keyword id="KW-0964">Secreted</keyword>